<evidence type="ECO:0000250" key="1"/>
<evidence type="ECO:0000255" key="2">
    <source>
        <dbReference type="PROSITE-ProRule" id="PRU00258"/>
    </source>
</evidence>
<evidence type="ECO:0000255" key="3">
    <source>
        <dbReference type="PROSITE-ProRule" id="PRU01348"/>
    </source>
</evidence>
<evidence type="ECO:0000255" key="4">
    <source>
        <dbReference type="PROSITE-ProRule" id="PRU01363"/>
    </source>
</evidence>
<evidence type="ECO:0000255" key="5">
    <source>
        <dbReference type="PROSITE-ProRule" id="PRU10022"/>
    </source>
</evidence>
<keyword id="KW-0596">Phosphopantetheine</keyword>
<keyword id="KW-0597">Phosphoprotein</keyword>
<keyword id="KW-1185">Reference proteome</keyword>
<keyword id="KW-0808">Transferase</keyword>
<protein>
    <recommendedName>
        <fullName>Probable polyketide synthase 22</fullName>
        <shortName>dipks22</shortName>
        <ecNumber>2.3.1.-</ecNumber>
    </recommendedName>
</protein>
<proteinExistence type="inferred from homology"/>
<name>PKS22_DICDI</name>
<reference key="1">
    <citation type="journal article" date="2005" name="Nature">
        <title>The genome of the social amoeba Dictyostelium discoideum.</title>
        <authorList>
            <person name="Eichinger L."/>
            <person name="Pachebat J.A."/>
            <person name="Gloeckner G."/>
            <person name="Rajandream M.A."/>
            <person name="Sucgang R."/>
            <person name="Berriman M."/>
            <person name="Song J."/>
            <person name="Olsen R."/>
            <person name="Szafranski K."/>
            <person name="Xu Q."/>
            <person name="Tunggal B."/>
            <person name="Kummerfeld S."/>
            <person name="Madera M."/>
            <person name="Konfortov B.A."/>
            <person name="Rivero F."/>
            <person name="Bankier A.T."/>
            <person name="Lehmann R."/>
            <person name="Hamlin N."/>
            <person name="Davies R."/>
            <person name="Gaudet P."/>
            <person name="Fey P."/>
            <person name="Pilcher K."/>
            <person name="Chen G."/>
            <person name="Saunders D."/>
            <person name="Sodergren E.J."/>
            <person name="Davis P."/>
            <person name="Kerhornou A."/>
            <person name="Nie X."/>
            <person name="Hall N."/>
            <person name="Anjard C."/>
            <person name="Hemphill L."/>
            <person name="Bason N."/>
            <person name="Farbrother P."/>
            <person name="Desany B."/>
            <person name="Just E."/>
            <person name="Morio T."/>
            <person name="Rost R."/>
            <person name="Churcher C.M."/>
            <person name="Cooper J."/>
            <person name="Haydock S."/>
            <person name="van Driessche N."/>
            <person name="Cronin A."/>
            <person name="Goodhead I."/>
            <person name="Muzny D.M."/>
            <person name="Mourier T."/>
            <person name="Pain A."/>
            <person name="Lu M."/>
            <person name="Harper D."/>
            <person name="Lindsay R."/>
            <person name="Hauser H."/>
            <person name="James K.D."/>
            <person name="Quiles M."/>
            <person name="Madan Babu M."/>
            <person name="Saito T."/>
            <person name="Buchrieser C."/>
            <person name="Wardroper A."/>
            <person name="Felder M."/>
            <person name="Thangavelu M."/>
            <person name="Johnson D."/>
            <person name="Knights A."/>
            <person name="Loulseged H."/>
            <person name="Mungall K.L."/>
            <person name="Oliver K."/>
            <person name="Price C."/>
            <person name="Quail M.A."/>
            <person name="Urushihara H."/>
            <person name="Hernandez J."/>
            <person name="Rabbinowitsch E."/>
            <person name="Steffen D."/>
            <person name="Sanders M."/>
            <person name="Ma J."/>
            <person name="Kohara Y."/>
            <person name="Sharp S."/>
            <person name="Simmonds M.N."/>
            <person name="Spiegler S."/>
            <person name="Tivey A."/>
            <person name="Sugano S."/>
            <person name="White B."/>
            <person name="Walker D."/>
            <person name="Woodward J.R."/>
            <person name="Winckler T."/>
            <person name="Tanaka Y."/>
            <person name="Shaulsky G."/>
            <person name="Schleicher M."/>
            <person name="Weinstock G.M."/>
            <person name="Rosenthal A."/>
            <person name="Cox E.C."/>
            <person name="Chisholm R.L."/>
            <person name="Gibbs R.A."/>
            <person name="Loomis W.F."/>
            <person name="Platzer M."/>
            <person name="Kay R.R."/>
            <person name="Williams J.G."/>
            <person name="Dear P.H."/>
            <person name="Noegel A.A."/>
            <person name="Barrell B.G."/>
            <person name="Kuspa A."/>
        </authorList>
    </citation>
    <scope>NUCLEOTIDE SEQUENCE [LARGE SCALE GENOMIC DNA]</scope>
    <source>
        <strain>AX4</strain>
    </source>
</reference>
<reference key="2">
    <citation type="journal article" date="2007" name="Bioinformatics">
        <title>Polyketide synthase genes and the natural products potential of Dictyostelium discoideum.</title>
        <authorList>
            <person name="Zucko J."/>
            <person name="Skunca N."/>
            <person name="Curk T."/>
            <person name="Zupan B."/>
            <person name="Long P.F."/>
            <person name="Cullum J."/>
            <person name="Kessin R.H."/>
            <person name="Hranueli D."/>
        </authorList>
    </citation>
    <scope>IDENTIFICATION</scope>
</reference>
<sequence>MIEGNIEKNNDNQVAIVGLGLRLPGNSGSPSEFWKNLLGGFDGIVDSNERWSDTFHSMGEISNKNAGLIDLEENWHSFEPLFFGINPTDAKQIDPQIKLMLKLTWEAFEDASIDPLKLRGTNTSVFVGAANTDYSFINFEQNEAPINVFNGTLSAFANRISYCFDLRGTSLTLDTACSSSLNAVHLGYESIVNGKSNYSVVAGCNILLNPYITRSFHSINITGKSGRCNSFDESADGFVRSEGVVVLILKRLSLAIQDGDQIYCVMKGSSSNVDGTFKKTNFFAPSKNAQSTNIKNAFLSSNGAMKYQDIDFFELHSTGTQVGDPIEVEAVADIFKNVKQEPLLIGSVKSNIGHLEPASGVASLAKVCLMFKHRQFVKNIHFNNPNPNIKFKEWNVKVCTETTAFPDRQVSMAINSFGITGSNACVLLSEYIKPSELKNQTSMKLNEKSKLLIPISTNSKKSLEQFKSKLLEEIDTYSESLTFEEFAMFQVYSKTTKLSQRSVLIGNDWNDLKIDINEIISTKNNKSGNIIKSNDINPPLVFSFCGQGPQYSKMGLNLYENEPIYKQSMDILDSILFKYFGYSIIQKLRSINDDPILINEPILAQPSIFMIQISLYKLYLHWGITPSIIVGHSLGEVASAFCSGMIDLETACFVIYKRATIQNKTNGSGRLLAISLNLEEFNNQFSKEYPEIEISCFNSPSSIVVCGNELDILNISKSLKDKQIFNSLLGTSSAFHSSKQDIIKDEIIESTNHIQSRPPSITTFSTVTSNKFDKNTPYNSSYIFDNLRKPVLFQQTIENIFKHIESNDLGNSVIFLELSPHPTLNHYVKEMIPKNSNYFLNKDSISVLSSLNKKKEDINEIQSTISQLYCFGYNVDFSAQFKSEITSNSFKKCSYLIPHYQWDESLFWREGISSLNNRKNGAPINQLGNKNESSPHISYTSYIDIKEEPFRFLKDHQFRGKSLFPGVGYLDIILKLFPNQDLTIPLLEFKSQFVLTEGVKKTLTTNLYKSAKNEYRATFNFKDQTSGKWIQSANSRILMKSLDVTVKKVDVQSIRDQCNWSTLKREQLYDLIKNYANISLLEPFQRIEEASYGDNRCLCKVSLDPTSSYDNESFLNICIIDTCIHPCIFFDNPASSVFERIEHLKIYSSSVPLTAEDRVKQQYVYCYAELIKQFSDFIYFKTTCFLKDGTVLLHSPLVTIASTLSTKSETDLECPNNQLFSQCLQPKDSILQSPLILKEHFNQQLQLQQSNIISISTLSTYLFSILKKRLNNLTVDEFQNNSLEQLIEKYSYVLDEVEVGTIRSNLILLTINFLLTHHKHIDQNQVSNFLLNNIPNELLVVDTIVSNKGISHIGIYQHQLILDIISKSIIPIVNEKIVFRILEIGCGVGELTKLINDNLESILNDNPSYNIDIEFVFSDYTDSKVLLIKERLFNSKKSCFFKIIDLNKQLQEQSFSPSYYDLIILSNTTNQIKDIKTSISFINEILTPNGHLLILDTNFIQTSIDEDYYLENYKQWLSFNYLNSGSGAMKLNQWNQLLINDLKFNNFICSTGEIEPYLIQVQKPNLSNSINSVSKEHTSEYDQIIIFGTCDEINIGSSFCGSGGVVPIAINSIDKFKEHAKLQPLTDKSLILFIESVNLLTVDNFNQVSMNYIEINQHLLKNEISGCKHILISRNINFETSNLFGSSLIGSFRYFCEFNQLNIYSFEFEGNNILSGGDKLFNIIQELSNSNKHSQNEFSIRSDGKIYYERIKLESNLKLKYKSKSYIENKNELVSRLKPDLTFALEAVLPLNPNFVEVKVMASGVNFKDFLVYRQLINMANSNENGDPSKPQFGYELSGIVTKVGKNVTKFKVGDHVMGVTFHTFSSSVHVDQDRIELKPSNISWFEASISLVYLTSYCSLFELGRLGLHGSTETVLIHSGSGGIGLSCIDLLQVYGFKGFLFVTVGSEEKKQFLKDRYGNFITEIYSTKNTDYEYLIKEKLIELKAPSQEYGGFSMICVDLIINTLSADYMDANFNCLSQGGRIIDLSITHMTTTDTTDFYKFKNHIGYMTYESVIAGFRKHKHVLKIIVDLLASGKLKTIPFNVYPVTKIKEAIESLGDRKHIGKNIVNFNDPEGIDLIDCPEFSNNHNFIHRSSNYKIHQDTLGQTILITGQAGLSDTIIKWIREKRSDSIESIIVLSKSPIKFELERAIGRIRSTNLKIYFKQVDISDEKLLLKTINQLFEENKDIKPIESIFHNAFSPAECEPLEIDMNHLISSHSAKSMGAYNLHKLSLNWPIKQFVLSSSVTSILGSQRQCGYVASNCFIDALSRHRKSLNLPCISINWGLLGGGGFAARNDAVFKLFELQGLVGISKDLVWGSLDLLLQNQNESTNKMVASFEFHATCKTYKNHKLSYKLDYFLNPIISKESVTDEKEFSIRQDIVDKFASLLSTDQSKLNLDIKVIDYGADSLLVVEVKNWADNKFTRNILSMPEIQNSTINQIINIVTTKVSNLPSKKK</sequence>
<dbReference type="EC" id="2.3.1.-"/>
<dbReference type="EMBL" id="AAFI02000058">
    <property type="protein sequence ID" value="EAL65488.1"/>
    <property type="molecule type" value="Genomic_DNA"/>
</dbReference>
<dbReference type="RefSeq" id="XP_638811.1">
    <property type="nucleotide sequence ID" value="XM_633719.1"/>
</dbReference>
<dbReference type="SMR" id="Q54QD3"/>
<dbReference type="FunCoup" id="Q54QD3">
    <property type="interactions" value="6"/>
</dbReference>
<dbReference type="STRING" id="44689.Q54QD3"/>
<dbReference type="PaxDb" id="44689-DDB0230076"/>
<dbReference type="EnsemblProtists" id="EAL65488">
    <property type="protein sequence ID" value="EAL65488"/>
    <property type="gene ID" value="DDB_G0284001"/>
</dbReference>
<dbReference type="GeneID" id="8624335"/>
<dbReference type="KEGG" id="ddi:DDB_G0284001"/>
<dbReference type="dictyBase" id="DDB_G0284001">
    <property type="gene designation" value="pks22"/>
</dbReference>
<dbReference type="VEuPathDB" id="AmoebaDB:DDB_G0284001"/>
<dbReference type="eggNOG" id="KOG1202">
    <property type="taxonomic scope" value="Eukaryota"/>
</dbReference>
<dbReference type="HOGENOM" id="CLU_000022_31_5_1"/>
<dbReference type="InParanoid" id="Q54QD3"/>
<dbReference type="OMA" id="FAGAMFH"/>
<dbReference type="PhylomeDB" id="Q54QD3"/>
<dbReference type="PRO" id="PR:Q54QD3"/>
<dbReference type="Proteomes" id="UP000002195">
    <property type="component" value="Chromosome 4"/>
</dbReference>
<dbReference type="GO" id="GO:0004315">
    <property type="term" value="F:3-oxoacyl-[acyl-carrier-protein] synthase activity"/>
    <property type="evidence" value="ECO:0007669"/>
    <property type="project" value="InterPro"/>
</dbReference>
<dbReference type="GO" id="GO:0016491">
    <property type="term" value="F:oxidoreductase activity"/>
    <property type="evidence" value="ECO:0007669"/>
    <property type="project" value="InterPro"/>
</dbReference>
<dbReference type="GO" id="GO:0006633">
    <property type="term" value="P:fatty acid biosynthetic process"/>
    <property type="evidence" value="ECO:0000318"/>
    <property type="project" value="GO_Central"/>
</dbReference>
<dbReference type="CDD" id="cd05195">
    <property type="entry name" value="enoyl_red"/>
    <property type="match status" value="1"/>
</dbReference>
<dbReference type="CDD" id="cd08954">
    <property type="entry name" value="KR_1_FAS_SDR_x"/>
    <property type="match status" value="1"/>
</dbReference>
<dbReference type="CDD" id="cd00833">
    <property type="entry name" value="PKS"/>
    <property type="match status" value="1"/>
</dbReference>
<dbReference type="Gene3D" id="3.30.70.3290">
    <property type="match status" value="1"/>
</dbReference>
<dbReference type="Gene3D" id="3.40.47.10">
    <property type="match status" value="1"/>
</dbReference>
<dbReference type="Gene3D" id="1.10.1200.10">
    <property type="entry name" value="ACP-like"/>
    <property type="match status" value="1"/>
</dbReference>
<dbReference type="Gene3D" id="3.40.366.10">
    <property type="entry name" value="Malonyl-Coenzyme A Acyl Carrier Protein, domain 2"/>
    <property type="match status" value="1"/>
</dbReference>
<dbReference type="Gene3D" id="3.90.180.10">
    <property type="entry name" value="Medium-chain alcohol dehydrogenases, catalytic domain"/>
    <property type="match status" value="1"/>
</dbReference>
<dbReference type="Gene3D" id="3.40.50.720">
    <property type="entry name" value="NAD(P)-binding Rossmann-like Domain"/>
    <property type="match status" value="2"/>
</dbReference>
<dbReference type="Gene3D" id="3.10.129.110">
    <property type="entry name" value="Polyketide synthase dehydratase"/>
    <property type="match status" value="1"/>
</dbReference>
<dbReference type="Gene3D" id="3.40.50.150">
    <property type="entry name" value="Vaccinia Virus protein VP39"/>
    <property type="match status" value="1"/>
</dbReference>
<dbReference type="InterPro" id="IPR001227">
    <property type="entry name" value="Ac_transferase_dom_sf"/>
</dbReference>
<dbReference type="InterPro" id="IPR036736">
    <property type="entry name" value="ACP-like_sf"/>
</dbReference>
<dbReference type="InterPro" id="IPR014043">
    <property type="entry name" value="Acyl_transferase_dom"/>
</dbReference>
<dbReference type="InterPro" id="IPR016035">
    <property type="entry name" value="Acyl_Trfase/lysoPLipase"/>
</dbReference>
<dbReference type="InterPro" id="IPR013154">
    <property type="entry name" value="ADH-like_N"/>
</dbReference>
<dbReference type="InterPro" id="IPR011032">
    <property type="entry name" value="GroES-like_sf"/>
</dbReference>
<dbReference type="InterPro" id="IPR018201">
    <property type="entry name" value="Ketoacyl_synth_AS"/>
</dbReference>
<dbReference type="InterPro" id="IPR014031">
    <property type="entry name" value="Ketoacyl_synth_C"/>
</dbReference>
<dbReference type="InterPro" id="IPR014030">
    <property type="entry name" value="Ketoacyl_synth_N"/>
</dbReference>
<dbReference type="InterPro" id="IPR013217">
    <property type="entry name" value="Methyltransf_12"/>
</dbReference>
<dbReference type="InterPro" id="IPR036291">
    <property type="entry name" value="NAD(P)-bd_dom_sf"/>
</dbReference>
<dbReference type="InterPro" id="IPR032821">
    <property type="entry name" value="PKS_assoc"/>
</dbReference>
<dbReference type="InterPro" id="IPR020841">
    <property type="entry name" value="PKS_Beta-ketoAc_synthase_dom"/>
</dbReference>
<dbReference type="InterPro" id="IPR042104">
    <property type="entry name" value="PKS_dehydratase_sf"/>
</dbReference>
<dbReference type="InterPro" id="IPR049552">
    <property type="entry name" value="PKS_DH_N"/>
</dbReference>
<dbReference type="InterPro" id="IPR020843">
    <property type="entry name" value="PKS_ER"/>
</dbReference>
<dbReference type="InterPro" id="IPR013968">
    <property type="entry name" value="PKS_KR"/>
</dbReference>
<dbReference type="InterPro" id="IPR049900">
    <property type="entry name" value="PKS_mFAS_DH"/>
</dbReference>
<dbReference type="InterPro" id="IPR050444">
    <property type="entry name" value="Polyketide_Synthase"/>
</dbReference>
<dbReference type="InterPro" id="IPR009081">
    <property type="entry name" value="PP-bd_ACP"/>
</dbReference>
<dbReference type="InterPro" id="IPR029063">
    <property type="entry name" value="SAM-dependent_MTases_sf"/>
</dbReference>
<dbReference type="InterPro" id="IPR016039">
    <property type="entry name" value="Thiolase-like"/>
</dbReference>
<dbReference type="PANTHER" id="PTHR45681:SF1">
    <property type="entry name" value="POLYKETIDE SYNTHASE 2-RELATED"/>
    <property type="match status" value="1"/>
</dbReference>
<dbReference type="PANTHER" id="PTHR45681">
    <property type="entry name" value="POLYKETIDE SYNTHASE 44-RELATED"/>
    <property type="match status" value="1"/>
</dbReference>
<dbReference type="Pfam" id="PF23297">
    <property type="entry name" value="ACP_SdgA_C"/>
    <property type="match status" value="1"/>
</dbReference>
<dbReference type="Pfam" id="PF00698">
    <property type="entry name" value="Acyl_transf_1"/>
    <property type="match status" value="1"/>
</dbReference>
<dbReference type="Pfam" id="PF08240">
    <property type="entry name" value="ADH_N"/>
    <property type="match status" value="1"/>
</dbReference>
<dbReference type="Pfam" id="PF13602">
    <property type="entry name" value="ADH_zinc_N_2"/>
    <property type="match status" value="1"/>
</dbReference>
<dbReference type="Pfam" id="PF16197">
    <property type="entry name" value="KAsynt_C_assoc"/>
    <property type="match status" value="1"/>
</dbReference>
<dbReference type="Pfam" id="PF00109">
    <property type="entry name" value="ketoacyl-synt"/>
    <property type="match status" value="1"/>
</dbReference>
<dbReference type="Pfam" id="PF02801">
    <property type="entry name" value="Ketoacyl-synt_C"/>
    <property type="match status" value="1"/>
</dbReference>
<dbReference type="Pfam" id="PF08659">
    <property type="entry name" value="KR"/>
    <property type="match status" value="1"/>
</dbReference>
<dbReference type="Pfam" id="PF08242">
    <property type="entry name" value="Methyltransf_12"/>
    <property type="match status" value="1"/>
</dbReference>
<dbReference type="Pfam" id="PF21089">
    <property type="entry name" value="PKS_DH_N"/>
    <property type="match status" value="1"/>
</dbReference>
<dbReference type="SMART" id="SM00827">
    <property type="entry name" value="PKS_AT"/>
    <property type="match status" value="1"/>
</dbReference>
<dbReference type="SMART" id="SM00829">
    <property type="entry name" value="PKS_ER"/>
    <property type="match status" value="1"/>
</dbReference>
<dbReference type="SMART" id="SM00822">
    <property type="entry name" value="PKS_KR"/>
    <property type="match status" value="1"/>
</dbReference>
<dbReference type="SMART" id="SM00825">
    <property type="entry name" value="PKS_KS"/>
    <property type="match status" value="1"/>
</dbReference>
<dbReference type="SUPFAM" id="SSF47336">
    <property type="entry name" value="ACP-like"/>
    <property type="match status" value="1"/>
</dbReference>
<dbReference type="SUPFAM" id="SSF52151">
    <property type="entry name" value="FabD/lysophospholipase-like"/>
    <property type="match status" value="1"/>
</dbReference>
<dbReference type="SUPFAM" id="SSF50129">
    <property type="entry name" value="GroES-like"/>
    <property type="match status" value="1"/>
</dbReference>
<dbReference type="SUPFAM" id="SSF51735">
    <property type="entry name" value="NAD(P)-binding Rossmann-fold domains"/>
    <property type="match status" value="2"/>
</dbReference>
<dbReference type="SUPFAM" id="SSF53335">
    <property type="entry name" value="S-adenosyl-L-methionine-dependent methyltransferases"/>
    <property type="match status" value="1"/>
</dbReference>
<dbReference type="SUPFAM" id="SSF53901">
    <property type="entry name" value="Thiolase-like"/>
    <property type="match status" value="1"/>
</dbReference>
<dbReference type="PROSITE" id="PS50075">
    <property type="entry name" value="CARRIER"/>
    <property type="match status" value="1"/>
</dbReference>
<dbReference type="PROSITE" id="PS00606">
    <property type="entry name" value="KS3_1"/>
    <property type="match status" value="1"/>
</dbReference>
<dbReference type="PROSITE" id="PS52004">
    <property type="entry name" value="KS3_2"/>
    <property type="match status" value="1"/>
</dbReference>
<dbReference type="PROSITE" id="PS52019">
    <property type="entry name" value="PKS_MFAS_DH"/>
    <property type="match status" value="1"/>
</dbReference>
<comment type="function">
    <text evidence="1">Probable polyketide synthase.</text>
</comment>
<comment type="cofactor">
    <cofactor evidence="1">
        <name>pantetheine 4'-phosphate</name>
        <dbReference type="ChEBI" id="CHEBI:47942"/>
    </cofactor>
    <text evidence="1">Binds 1 phosphopantetheine covalently.</text>
</comment>
<comment type="domain">
    <text evidence="1">Modular protein that is responsible for the completion of one condensation-processing cycle. The beta-ketoacyl synthase region is responsible for the actual condensation reaction while the acyl/malonyl transferase region is responsible for incorporating carboxylic acids units onto an acyl carrier protein (ACP) domain (By similarity).</text>
</comment>
<comment type="miscellaneous">
    <text>Encoded by one of the numerous copies of polyketide synthase genes and clustered as a pair pks22/pks23 in chromosome 4.</text>
</comment>
<feature type="chain" id="PRO_0000371385" description="Probable polyketide synthase 22">
    <location>
        <begin position="1"/>
        <end position="2499"/>
    </location>
</feature>
<feature type="domain" description="Ketosynthase family 3 (KS3)" evidence="3">
    <location>
        <begin position="11"/>
        <end position="430"/>
    </location>
</feature>
<feature type="domain" description="PKS/mFAS DH" evidence="4">
    <location>
        <begin position="922"/>
        <end position="1209"/>
    </location>
</feature>
<feature type="domain" description="Carrier" evidence="2">
    <location>
        <begin position="2414"/>
        <end position="2491"/>
    </location>
</feature>
<feature type="region of interest" description="Acyl/malonyl transferases">
    <location>
        <begin position="623"/>
        <end position="656"/>
    </location>
</feature>
<feature type="region of interest" description="N-terminal hotdog fold" evidence="4">
    <location>
        <begin position="922"/>
        <end position="1044"/>
    </location>
</feature>
<feature type="region of interest" description="C-terminal hotdog fold" evidence="4">
    <location>
        <begin position="1059"/>
        <end position="1209"/>
    </location>
</feature>
<feature type="active site" description="For beta-ketoacyl synthase activity" evidence="3">
    <location>
        <position position="177"/>
    </location>
</feature>
<feature type="active site" description="For beta-ketoacyl synthase activity" evidence="3">
    <location>
        <position position="316"/>
    </location>
</feature>
<feature type="active site" description="For beta-ketoacyl synthase activity" evidence="3">
    <location>
        <position position="354"/>
    </location>
</feature>
<feature type="active site" description="For acyl/malonyl transferase activity" evidence="5">
    <location>
        <position position="633"/>
    </location>
</feature>
<feature type="active site" description="Proton acceptor; for dehydratase activity" evidence="4">
    <location>
        <position position="956"/>
    </location>
</feature>
<feature type="active site" description="Proton donor; for dehydratase activity" evidence="4">
    <location>
        <position position="1121"/>
    </location>
</feature>
<feature type="modified residue" description="O-(pantetheine 4'-phosphoryl)serine" evidence="2">
    <location>
        <position position="2451"/>
    </location>
</feature>
<gene>
    <name type="primary">pks22</name>
    <name type="ORF">DDB_G0284001</name>
</gene>
<accession>Q54QD3</accession>
<organism>
    <name type="scientific">Dictyostelium discoideum</name>
    <name type="common">Social amoeba</name>
    <dbReference type="NCBI Taxonomy" id="44689"/>
    <lineage>
        <taxon>Eukaryota</taxon>
        <taxon>Amoebozoa</taxon>
        <taxon>Evosea</taxon>
        <taxon>Eumycetozoa</taxon>
        <taxon>Dictyostelia</taxon>
        <taxon>Dictyosteliales</taxon>
        <taxon>Dictyosteliaceae</taxon>
        <taxon>Dictyostelium</taxon>
    </lineage>
</organism>